<comment type="catalytic activity">
    <reaction evidence="1">
        <text>2-(N(omega)-L-arginino)succinate = fumarate + L-arginine</text>
        <dbReference type="Rhea" id="RHEA:24020"/>
        <dbReference type="ChEBI" id="CHEBI:29806"/>
        <dbReference type="ChEBI" id="CHEBI:32682"/>
        <dbReference type="ChEBI" id="CHEBI:57472"/>
        <dbReference type="EC" id="4.3.2.1"/>
    </reaction>
</comment>
<comment type="pathway">
    <text evidence="1">Amino-acid biosynthesis; L-arginine biosynthesis; L-arginine from L-ornithine and carbamoyl phosphate: step 3/3.</text>
</comment>
<comment type="subcellular location">
    <subcellularLocation>
        <location evidence="1">Cytoplasm</location>
    </subcellularLocation>
</comment>
<comment type="similarity">
    <text evidence="1">Belongs to the lyase 1 family. Argininosuccinate lyase subfamily.</text>
</comment>
<proteinExistence type="inferred from homology"/>
<reference key="1">
    <citation type="submission" date="2007-04" db="EMBL/GenBank/DDBJ databases">
        <title>Complete sequence of chromosome of Mycobacterium gilvum PYR-GCK.</title>
        <authorList>
            <consortium name="US DOE Joint Genome Institute"/>
            <person name="Copeland A."/>
            <person name="Lucas S."/>
            <person name="Lapidus A."/>
            <person name="Barry K."/>
            <person name="Detter J.C."/>
            <person name="Glavina del Rio T."/>
            <person name="Hammon N."/>
            <person name="Israni S."/>
            <person name="Dalin E."/>
            <person name="Tice H."/>
            <person name="Pitluck S."/>
            <person name="Chain P."/>
            <person name="Malfatti S."/>
            <person name="Shin M."/>
            <person name="Vergez L."/>
            <person name="Schmutz J."/>
            <person name="Larimer F."/>
            <person name="Land M."/>
            <person name="Hauser L."/>
            <person name="Kyrpides N."/>
            <person name="Mikhailova N."/>
            <person name="Miller C."/>
            <person name="Richardson P."/>
        </authorList>
    </citation>
    <scope>NUCLEOTIDE SEQUENCE [LARGE SCALE GENOMIC DNA]</scope>
    <source>
        <strain>PYR-GCK</strain>
    </source>
</reference>
<name>ARLY_MYCGI</name>
<feature type="chain" id="PRO_1000073850" description="Argininosuccinate lyase">
    <location>
        <begin position="1"/>
        <end position="470"/>
    </location>
</feature>
<gene>
    <name evidence="1" type="primary">argH</name>
    <name type="ordered locus">Mflv_3523</name>
</gene>
<evidence type="ECO:0000255" key="1">
    <source>
        <dbReference type="HAMAP-Rule" id="MF_00006"/>
    </source>
</evidence>
<protein>
    <recommendedName>
        <fullName evidence="1">Argininosuccinate lyase</fullName>
        <shortName evidence="1">ASAL</shortName>
        <ecNumber evidence="1">4.3.2.1</ecNumber>
    </recommendedName>
    <alternativeName>
        <fullName evidence="1">Arginosuccinase</fullName>
    </alternativeName>
</protein>
<organism>
    <name type="scientific">Mycolicibacterium gilvum (strain PYR-GCK)</name>
    <name type="common">Mycobacterium gilvum (strain PYR-GCK)</name>
    <dbReference type="NCBI Taxonomy" id="350054"/>
    <lineage>
        <taxon>Bacteria</taxon>
        <taxon>Bacillati</taxon>
        <taxon>Actinomycetota</taxon>
        <taxon>Actinomycetes</taxon>
        <taxon>Mycobacteriales</taxon>
        <taxon>Mycobacteriaceae</taxon>
        <taxon>Mycolicibacterium</taxon>
    </lineage>
</organism>
<dbReference type="EC" id="4.3.2.1" evidence="1"/>
<dbReference type="EMBL" id="CP000656">
    <property type="protein sequence ID" value="ABP45997.1"/>
    <property type="molecule type" value="Genomic_DNA"/>
</dbReference>
<dbReference type="SMR" id="A4T9W3"/>
<dbReference type="STRING" id="350054.Mflv_3523"/>
<dbReference type="KEGG" id="mgi:Mflv_3523"/>
<dbReference type="eggNOG" id="COG0165">
    <property type="taxonomic scope" value="Bacteria"/>
</dbReference>
<dbReference type="HOGENOM" id="CLU_027272_2_2_11"/>
<dbReference type="OrthoDB" id="9769623at2"/>
<dbReference type="UniPathway" id="UPA00068">
    <property type="reaction ID" value="UER00114"/>
</dbReference>
<dbReference type="GO" id="GO:0005829">
    <property type="term" value="C:cytosol"/>
    <property type="evidence" value="ECO:0007669"/>
    <property type="project" value="TreeGrafter"/>
</dbReference>
<dbReference type="GO" id="GO:0004056">
    <property type="term" value="F:argininosuccinate lyase activity"/>
    <property type="evidence" value="ECO:0007669"/>
    <property type="project" value="UniProtKB-UniRule"/>
</dbReference>
<dbReference type="GO" id="GO:0042450">
    <property type="term" value="P:arginine biosynthetic process via ornithine"/>
    <property type="evidence" value="ECO:0007669"/>
    <property type="project" value="InterPro"/>
</dbReference>
<dbReference type="GO" id="GO:0006526">
    <property type="term" value="P:L-arginine biosynthetic process"/>
    <property type="evidence" value="ECO:0007669"/>
    <property type="project" value="UniProtKB-UniRule"/>
</dbReference>
<dbReference type="CDD" id="cd01359">
    <property type="entry name" value="Argininosuccinate_lyase"/>
    <property type="match status" value="1"/>
</dbReference>
<dbReference type="FunFam" id="1.10.40.30:FF:000001">
    <property type="entry name" value="Argininosuccinate lyase"/>
    <property type="match status" value="1"/>
</dbReference>
<dbReference type="FunFam" id="1.20.200.10:FF:000015">
    <property type="entry name" value="argininosuccinate lyase isoform X2"/>
    <property type="match status" value="1"/>
</dbReference>
<dbReference type="Gene3D" id="1.10.40.30">
    <property type="entry name" value="Fumarase/aspartase (C-terminal domain)"/>
    <property type="match status" value="1"/>
</dbReference>
<dbReference type="Gene3D" id="1.20.200.10">
    <property type="entry name" value="Fumarase/aspartase (Central domain)"/>
    <property type="match status" value="1"/>
</dbReference>
<dbReference type="Gene3D" id="1.10.275.10">
    <property type="entry name" value="Fumarase/aspartase (N-terminal domain)"/>
    <property type="match status" value="1"/>
</dbReference>
<dbReference type="HAMAP" id="MF_00006">
    <property type="entry name" value="Arg_succ_lyase"/>
    <property type="match status" value="1"/>
</dbReference>
<dbReference type="InterPro" id="IPR029419">
    <property type="entry name" value="Arg_succ_lyase_C"/>
</dbReference>
<dbReference type="InterPro" id="IPR009049">
    <property type="entry name" value="Argininosuccinate_lyase"/>
</dbReference>
<dbReference type="InterPro" id="IPR024083">
    <property type="entry name" value="Fumarase/histidase_N"/>
</dbReference>
<dbReference type="InterPro" id="IPR020557">
    <property type="entry name" value="Fumarate_lyase_CS"/>
</dbReference>
<dbReference type="InterPro" id="IPR000362">
    <property type="entry name" value="Fumarate_lyase_fam"/>
</dbReference>
<dbReference type="InterPro" id="IPR022761">
    <property type="entry name" value="Fumarate_lyase_N"/>
</dbReference>
<dbReference type="InterPro" id="IPR008948">
    <property type="entry name" value="L-Aspartase-like"/>
</dbReference>
<dbReference type="NCBIfam" id="TIGR00838">
    <property type="entry name" value="argH"/>
    <property type="match status" value="1"/>
</dbReference>
<dbReference type="PANTHER" id="PTHR43814">
    <property type="entry name" value="ARGININOSUCCINATE LYASE"/>
    <property type="match status" value="1"/>
</dbReference>
<dbReference type="PANTHER" id="PTHR43814:SF1">
    <property type="entry name" value="ARGININOSUCCINATE LYASE"/>
    <property type="match status" value="1"/>
</dbReference>
<dbReference type="Pfam" id="PF14698">
    <property type="entry name" value="ASL_C2"/>
    <property type="match status" value="1"/>
</dbReference>
<dbReference type="Pfam" id="PF00206">
    <property type="entry name" value="Lyase_1"/>
    <property type="match status" value="1"/>
</dbReference>
<dbReference type="PRINTS" id="PR00145">
    <property type="entry name" value="ARGSUCLYASE"/>
</dbReference>
<dbReference type="PRINTS" id="PR00149">
    <property type="entry name" value="FUMRATELYASE"/>
</dbReference>
<dbReference type="SUPFAM" id="SSF48557">
    <property type="entry name" value="L-aspartase-like"/>
    <property type="match status" value="1"/>
</dbReference>
<dbReference type="PROSITE" id="PS00163">
    <property type="entry name" value="FUMARATE_LYASES"/>
    <property type="match status" value="1"/>
</dbReference>
<sequence length="470" mass="50020">MSTNEGSLWGGRFADGPADALAALSKSTHFDWVLAPYDVVASKAHARVLFRAGLLTEEQRDGLLAGLDSLGSDVADGSFGPLVSDEDVHGALERGLIDRVGPELGGRLRAGRSRNDQVATLFRLWLRDAVRRVADGVLEVVGALTTQAAAHPTAIMPGKTHLQSAQPVLLAHHLLAHAHPLLRDVDRLADFDKRAAVSPYGSGALAGSSLGLDPDAIAEELGFAAAADNSIDATASRDFAAEAAFVFSMIGVDLSRLAEDVILWSTTEFGYVELHDAWSTGSSIMPQKKNPDIAELARGKSGRLIGNLTGLLATLKAQPLAYNRDLQEDKEPVFDSVAQLELLLPAMAGLVATLRFDVDRMAELAPLGYTLATDVAEWLVRRGVPFRVAHEAAGAAVRAAEARGVGLEELEDAELAGIHPELTAEVRDVLSTEGSVNSRDARGGTAPIQVARQLGAVRDTADELRRRLRR</sequence>
<keyword id="KW-0028">Amino-acid biosynthesis</keyword>
<keyword id="KW-0055">Arginine biosynthesis</keyword>
<keyword id="KW-0963">Cytoplasm</keyword>
<keyword id="KW-0456">Lyase</keyword>
<accession>A4T9W3</accession>